<organism>
    <name type="scientific">Anaeromyxobacter sp. (strain Fw109-5)</name>
    <dbReference type="NCBI Taxonomy" id="404589"/>
    <lineage>
        <taxon>Bacteria</taxon>
        <taxon>Pseudomonadati</taxon>
        <taxon>Myxococcota</taxon>
        <taxon>Myxococcia</taxon>
        <taxon>Myxococcales</taxon>
        <taxon>Cystobacterineae</taxon>
        <taxon>Anaeromyxobacteraceae</taxon>
        <taxon>Anaeromyxobacter</taxon>
    </lineage>
</organism>
<reference key="1">
    <citation type="journal article" date="2015" name="Genome Announc.">
        <title>Complete genome sequence of Anaeromyxobacter sp. Fw109-5, an anaerobic, metal-reducing bacterium isolated from a contaminated subsurface environment.</title>
        <authorList>
            <person name="Hwang C."/>
            <person name="Copeland A."/>
            <person name="Lucas S."/>
            <person name="Lapidus A."/>
            <person name="Barry K."/>
            <person name="Glavina Del Rio T."/>
            <person name="Dalin E."/>
            <person name="Tice H."/>
            <person name="Pitluck S."/>
            <person name="Sims D."/>
            <person name="Brettin T."/>
            <person name="Bruce D.C."/>
            <person name="Detter J.C."/>
            <person name="Han C.S."/>
            <person name="Schmutz J."/>
            <person name="Larimer F.W."/>
            <person name="Land M.L."/>
            <person name="Hauser L.J."/>
            <person name="Kyrpides N."/>
            <person name="Lykidis A."/>
            <person name="Richardson P."/>
            <person name="Belieav A."/>
            <person name="Sanford R.A."/>
            <person name="Loeffler F.E."/>
            <person name="Fields M.W."/>
        </authorList>
    </citation>
    <scope>NUCLEOTIDE SEQUENCE [LARGE SCALE GENOMIC DNA]</scope>
    <source>
        <strain>Fw109-5</strain>
    </source>
</reference>
<name>HEM12_ANADF</name>
<comment type="function">
    <text evidence="1">Catalyzes the NADPH-dependent reduction of glutamyl-tRNA(Glu) to glutamate 1-semialdehyde (GSA).</text>
</comment>
<comment type="catalytic activity">
    <reaction evidence="1">
        <text>(S)-4-amino-5-oxopentanoate + tRNA(Glu) + NADP(+) = L-glutamyl-tRNA(Glu) + NADPH + H(+)</text>
        <dbReference type="Rhea" id="RHEA:12344"/>
        <dbReference type="Rhea" id="RHEA-COMP:9663"/>
        <dbReference type="Rhea" id="RHEA-COMP:9680"/>
        <dbReference type="ChEBI" id="CHEBI:15378"/>
        <dbReference type="ChEBI" id="CHEBI:57501"/>
        <dbReference type="ChEBI" id="CHEBI:57783"/>
        <dbReference type="ChEBI" id="CHEBI:58349"/>
        <dbReference type="ChEBI" id="CHEBI:78442"/>
        <dbReference type="ChEBI" id="CHEBI:78520"/>
        <dbReference type="EC" id="1.2.1.70"/>
    </reaction>
</comment>
<comment type="pathway">
    <text evidence="1">Porphyrin-containing compound metabolism; protoporphyrin-IX biosynthesis; 5-aminolevulinate from L-glutamyl-tRNA(Glu): step 1/2.</text>
</comment>
<comment type="subunit">
    <text evidence="1">Homodimer.</text>
</comment>
<comment type="domain">
    <text evidence="1">Possesses an unusual extended V-shaped dimeric structure with each monomer consisting of three distinct domains arranged along a curved 'spinal' alpha-helix. The N-terminal catalytic domain specifically recognizes the glutamate moiety of the substrate. The second domain is the NADPH-binding domain, and the third C-terminal domain is responsible for dimerization.</text>
</comment>
<comment type="miscellaneous">
    <text evidence="1">During catalysis, the active site Cys acts as a nucleophile attacking the alpha-carbonyl group of tRNA-bound glutamate with the formation of a thioester intermediate between enzyme and glutamate, and the concomitant release of tRNA(Glu). The thioester intermediate is finally reduced by direct hydride transfer from NADPH, to form the product GSA.</text>
</comment>
<comment type="similarity">
    <text evidence="1">Belongs to the glutamyl-tRNA reductase family.</text>
</comment>
<comment type="sequence caution" evidence="2">
    <conflict type="erroneous initiation">
        <sequence resource="EMBL-CDS" id="ABS26048"/>
    </conflict>
</comment>
<sequence>MLVAVGLNQKGATVADREVLALPAEGFQSTLAEYAALDAVDEIAVMSTCYRVEIYAATRCPAAATLSLRQALNARAGRELPLFELHGEEAYRHLVRVASSLESAILGEPQILGQVKEAFQRSIDQGVAAKELTSVLNRALSAAKRVRTDTAIGRAGISWGHAAATLAEKVLGKMQGRRVVVVGAGEMARLSAQHLRDQGARIVVLNRTLVNGEALAREVGGVARPLEALGEELAQADVVVSAAPVAPDAFQPEAMAELSRSRKRPIVLVDLAVPRAIPAATGAIRDVYLCDVDDLDRVMKAAMSERAAAVADADRIIAEEVGKFVRAEAERRAAPLIQEMRTRASAIAREEVERTLRRLGEDPEVERRLEAMAGSIVSKILHAPSARLRQAVCDGCSGEALVSAAVEIFELSADIRVHRGNAA</sequence>
<protein>
    <recommendedName>
        <fullName evidence="1">Glutamyl-tRNA reductase 2</fullName>
        <shortName evidence="1">GluTR 2</shortName>
        <ecNumber evidence="1">1.2.1.70</ecNumber>
    </recommendedName>
</protein>
<dbReference type="EC" id="1.2.1.70" evidence="1"/>
<dbReference type="EMBL" id="CP000769">
    <property type="protein sequence ID" value="ABS26048.1"/>
    <property type="status" value="ALT_INIT"/>
    <property type="molecule type" value="Genomic_DNA"/>
</dbReference>
<dbReference type="RefSeq" id="WP_041448240.1">
    <property type="nucleotide sequence ID" value="NC_009675.1"/>
</dbReference>
<dbReference type="SMR" id="A7HBF2"/>
<dbReference type="STRING" id="404589.Anae109_1845"/>
<dbReference type="KEGG" id="afw:Anae109_1845"/>
<dbReference type="eggNOG" id="COG0373">
    <property type="taxonomic scope" value="Bacteria"/>
</dbReference>
<dbReference type="HOGENOM" id="CLU_035113_2_2_7"/>
<dbReference type="OrthoDB" id="110209at2"/>
<dbReference type="UniPathway" id="UPA00251">
    <property type="reaction ID" value="UER00316"/>
</dbReference>
<dbReference type="Proteomes" id="UP000006382">
    <property type="component" value="Chromosome"/>
</dbReference>
<dbReference type="GO" id="GO:0008883">
    <property type="term" value="F:glutamyl-tRNA reductase activity"/>
    <property type="evidence" value="ECO:0007669"/>
    <property type="project" value="UniProtKB-UniRule"/>
</dbReference>
<dbReference type="GO" id="GO:0050661">
    <property type="term" value="F:NADP binding"/>
    <property type="evidence" value="ECO:0007669"/>
    <property type="project" value="InterPro"/>
</dbReference>
<dbReference type="GO" id="GO:0019353">
    <property type="term" value="P:protoporphyrinogen IX biosynthetic process from glutamate"/>
    <property type="evidence" value="ECO:0007669"/>
    <property type="project" value="TreeGrafter"/>
</dbReference>
<dbReference type="CDD" id="cd05213">
    <property type="entry name" value="NAD_bind_Glutamyl_tRNA_reduct"/>
    <property type="match status" value="1"/>
</dbReference>
<dbReference type="FunFam" id="3.30.460.30:FF:000001">
    <property type="entry name" value="Glutamyl-tRNA reductase"/>
    <property type="match status" value="1"/>
</dbReference>
<dbReference type="Gene3D" id="3.30.460.30">
    <property type="entry name" value="Glutamyl-tRNA reductase, N-terminal domain"/>
    <property type="match status" value="1"/>
</dbReference>
<dbReference type="Gene3D" id="3.40.50.720">
    <property type="entry name" value="NAD(P)-binding Rossmann-like Domain"/>
    <property type="match status" value="1"/>
</dbReference>
<dbReference type="HAMAP" id="MF_00087">
    <property type="entry name" value="Glu_tRNA_reductase"/>
    <property type="match status" value="1"/>
</dbReference>
<dbReference type="InterPro" id="IPR000343">
    <property type="entry name" value="4pyrrol_synth_GluRdtase"/>
</dbReference>
<dbReference type="InterPro" id="IPR015896">
    <property type="entry name" value="4pyrrol_synth_GluRdtase_dimer"/>
</dbReference>
<dbReference type="InterPro" id="IPR015895">
    <property type="entry name" value="4pyrrol_synth_GluRdtase_N"/>
</dbReference>
<dbReference type="InterPro" id="IPR018214">
    <property type="entry name" value="GluRdtase_CS"/>
</dbReference>
<dbReference type="InterPro" id="IPR036453">
    <property type="entry name" value="GluRdtase_dimer_dom_sf"/>
</dbReference>
<dbReference type="InterPro" id="IPR036343">
    <property type="entry name" value="GluRdtase_N_sf"/>
</dbReference>
<dbReference type="InterPro" id="IPR036291">
    <property type="entry name" value="NAD(P)-bd_dom_sf"/>
</dbReference>
<dbReference type="InterPro" id="IPR006151">
    <property type="entry name" value="Shikm_DH/Glu-tRNA_Rdtase"/>
</dbReference>
<dbReference type="NCBIfam" id="TIGR01035">
    <property type="entry name" value="hemA"/>
    <property type="match status" value="1"/>
</dbReference>
<dbReference type="PANTHER" id="PTHR43013">
    <property type="entry name" value="GLUTAMYL-TRNA REDUCTASE"/>
    <property type="match status" value="1"/>
</dbReference>
<dbReference type="PANTHER" id="PTHR43013:SF1">
    <property type="entry name" value="GLUTAMYL-TRNA REDUCTASE"/>
    <property type="match status" value="1"/>
</dbReference>
<dbReference type="Pfam" id="PF00745">
    <property type="entry name" value="GlutR_dimer"/>
    <property type="match status" value="1"/>
</dbReference>
<dbReference type="Pfam" id="PF05201">
    <property type="entry name" value="GlutR_N"/>
    <property type="match status" value="1"/>
</dbReference>
<dbReference type="Pfam" id="PF01488">
    <property type="entry name" value="Shikimate_DH"/>
    <property type="match status" value="1"/>
</dbReference>
<dbReference type="PIRSF" id="PIRSF000445">
    <property type="entry name" value="4pyrrol_synth_GluRdtase"/>
    <property type="match status" value="1"/>
</dbReference>
<dbReference type="SUPFAM" id="SSF69742">
    <property type="entry name" value="Glutamyl tRNA-reductase catalytic, N-terminal domain"/>
    <property type="match status" value="1"/>
</dbReference>
<dbReference type="SUPFAM" id="SSF69075">
    <property type="entry name" value="Glutamyl tRNA-reductase dimerization domain"/>
    <property type="match status" value="1"/>
</dbReference>
<dbReference type="SUPFAM" id="SSF51735">
    <property type="entry name" value="NAD(P)-binding Rossmann-fold domains"/>
    <property type="match status" value="1"/>
</dbReference>
<dbReference type="PROSITE" id="PS00747">
    <property type="entry name" value="GLUTR"/>
    <property type="match status" value="1"/>
</dbReference>
<feature type="chain" id="PRO_0000335008" description="Glutamyl-tRNA reductase 2">
    <location>
        <begin position="1"/>
        <end position="423"/>
    </location>
</feature>
<feature type="active site" description="Nucleophile" evidence="1">
    <location>
        <position position="49"/>
    </location>
</feature>
<feature type="binding site" evidence="1">
    <location>
        <begin position="48"/>
        <end position="51"/>
    </location>
    <ligand>
        <name>substrate</name>
    </ligand>
</feature>
<feature type="binding site" evidence="1">
    <location>
        <position position="103"/>
    </location>
    <ligand>
        <name>substrate</name>
    </ligand>
</feature>
<feature type="binding site" evidence="1">
    <location>
        <begin position="108"/>
        <end position="110"/>
    </location>
    <ligand>
        <name>substrate</name>
    </ligand>
</feature>
<feature type="binding site" evidence="1">
    <location>
        <position position="114"/>
    </location>
    <ligand>
        <name>substrate</name>
    </ligand>
</feature>
<feature type="binding site" evidence="1">
    <location>
        <begin position="183"/>
        <end position="188"/>
    </location>
    <ligand>
        <name>NADP(+)</name>
        <dbReference type="ChEBI" id="CHEBI:58349"/>
    </ligand>
</feature>
<feature type="site" description="Important for activity" evidence="1">
    <location>
        <position position="93"/>
    </location>
</feature>
<accession>A7HBF2</accession>
<evidence type="ECO:0000255" key="1">
    <source>
        <dbReference type="HAMAP-Rule" id="MF_00087"/>
    </source>
</evidence>
<evidence type="ECO:0000305" key="2"/>
<keyword id="KW-0521">NADP</keyword>
<keyword id="KW-0560">Oxidoreductase</keyword>
<keyword id="KW-0627">Porphyrin biosynthesis</keyword>
<keyword id="KW-1185">Reference proteome</keyword>
<proteinExistence type="inferred from homology"/>
<gene>
    <name evidence="1" type="primary">hemA2</name>
    <name type="ordered locus">Anae109_1845</name>
</gene>